<accession>B9LAL2</accession>
<proteinExistence type="inferred from homology"/>
<comment type="function">
    <text evidence="1">Endonuclease that specifically degrades the RNA of RNA-DNA hybrids.</text>
</comment>
<comment type="catalytic activity">
    <reaction evidence="1">
        <text>Endonucleolytic cleavage to 5'-phosphomonoester.</text>
        <dbReference type="EC" id="3.1.26.4"/>
    </reaction>
</comment>
<comment type="cofactor">
    <cofactor evidence="1">
        <name>Mn(2+)</name>
        <dbReference type="ChEBI" id="CHEBI:29035"/>
    </cofactor>
    <cofactor evidence="1">
        <name>Mg(2+)</name>
        <dbReference type="ChEBI" id="CHEBI:18420"/>
    </cofactor>
    <text evidence="1">Manganese or magnesium. Binds 1 divalent metal ion per monomer in the absence of substrate. May bind a second metal ion after substrate binding.</text>
</comment>
<comment type="subcellular location">
    <subcellularLocation>
        <location evidence="1">Cytoplasm</location>
    </subcellularLocation>
</comment>
<comment type="similarity">
    <text evidence="1">Belongs to the RNase HII family.</text>
</comment>
<organism>
    <name type="scientific">Chloroflexus aurantiacus (strain ATCC 29364 / DSM 637 / Y-400-fl)</name>
    <dbReference type="NCBI Taxonomy" id="480224"/>
    <lineage>
        <taxon>Bacteria</taxon>
        <taxon>Bacillati</taxon>
        <taxon>Chloroflexota</taxon>
        <taxon>Chloroflexia</taxon>
        <taxon>Chloroflexales</taxon>
        <taxon>Chloroflexineae</taxon>
        <taxon>Chloroflexaceae</taxon>
        <taxon>Chloroflexus</taxon>
    </lineage>
</organism>
<keyword id="KW-0963">Cytoplasm</keyword>
<keyword id="KW-0255">Endonuclease</keyword>
<keyword id="KW-0378">Hydrolase</keyword>
<keyword id="KW-0464">Manganese</keyword>
<keyword id="KW-0479">Metal-binding</keyword>
<keyword id="KW-0540">Nuclease</keyword>
<dbReference type="EC" id="3.1.26.4" evidence="1"/>
<dbReference type="EMBL" id="CP001364">
    <property type="protein sequence ID" value="ACM52558.1"/>
    <property type="molecule type" value="Genomic_DNA"/>
</dbReference>
<dbReference type="SMR" id="B9LAL2"/>
<dbReference type="KEGG" id="chl:Chy400_1137"/>
<dbReference type="HOGENOM" id="CLU_036532_3_2_0"/>
<dbReference type="OrthoDB" id="9803420at2"/>
<dbReference type="GO" id="GO:0005737">
    <property type="term" value="C:cytoplasm"/>
    <property type="evidence" value="ECO:0007669"/>
    <property type="project" value="UniProtKB-SubCell"/>
</dbReference>
<dbReference type="GO" id="GO:0032299">
    <property type="term" value="C:ribonuclease H2 complex"/>
    <property type="evidence" value="ECO:0007669"/>
    <property type="project" value="TreeGrafter"/>
</dbReference>
<dbReference type="GO" id="GO:0030145">
    <property type="term" value="F:manganese ion binding"/>
    <property type="evidence" value="ECO:0007669"/>
    <property type="project" value="UniProtKB-UniRule"/>
</dbReference>
<dbReference type="GO" id="GO:0003723">
    <property type="term" value="F:RNA binding"/>
    <property type="evidence" value="ECO:0007669"/>
    <property type="project" value="InterPro"/>
</dbReference>
<dbReference type="GO" id="GO:0004523">
    <property type="term" value="F:RNA-DNA hybrid ribonuclease activity"/>
    <property type="evidence" value="ECO:0007669"/>
    <property type="project" value="UniProtKB-UniRule"/>
</dbReference>
<dbReference type="GO" id="GO:0043137">
    <property type="term" value="P:DNA replication, removal of RNA primer"/>
    <property type="evidence" value="ECO:0007669"/>
    <property type="project" value="TreeGrafter"/>
</dbReference>
<dbReference type="GO" id="GO:0006298">
    <property type="term" value="P:mismatch repair"/>
    <property type="evidence" value="ECO:0007669"/>
    <property type="project" value="TreeGrafter"/>
</dbReference>
<dbReference type="CDD" id="cd07182">
    <property type="entry name" value="RNase_HII_bacteria_HII_like"/>
    <property type="match status" value="1"/>
</dbReference>
<dbReference type="FunFam" id="3.30.420.10:FF:000167">
    <property type="entry name" value="Ribonuclease HII"/>
    <property type="match status" value="1"/>
</dbReference>
<dbReference type="Gene3D" id="3.30.420.10">
    <property type="entry name" value="Ribonuclease H-like superfamily/Ribonuclease H"/>
    <property type="match status" value="1"/>
</dbReference>
<dbReference type="HAMAP" id="MF_00052_B">
    <property type="entry name" value="RNase_HII_B"/>
    <property type="match status" value="1"/>
</dbReference>
<dbReference type="InterPro" id="IPR022898">
    <property type="entry name" value="RNase_HII"/>
</dbReference>
<dbReference type="InterPro" id="IPR001352">
    <property type="entry name" value="RNase_HII/HIII"/>
</dbReference>
<dbReference type="InterPro" id="IPR024567">
    <property type="entry name" value="RNase_HII/HIII_dom"/>
</dbReference>
<dbReference type="InterPro" id="IPR012337">
    <property type="entry name" value="RNaseH-like_sf"/>
</dbReference>
<dbReference type="InterPro" id="IPR036397">
    <property type="entry name" value="RNaseH_sf"/>
</dbReference>
<dbReference type="NCBIfam" id="NF000595">
    <property type="entry name" value="PRK00015.1-3"/>
    <property type="match status" value="1"/>
</dbReference>
<dbReference type="PANTHER" id="PTHR10954">
    <property type="entry name" value="RIBONUCLEASE H2 SUBUNIT A"/>
    <property type="match status" value="1"/>
</dbReference>
<dbReference type="PANTHER" id="PTHR10954:SF18">
    <property type="entry name" value="RIBONUCLEASE HII"/>
    <property type="match status" value="1"/>
</dbReference>
<dbReference type="Pfam" id="PF01351">
    <property type="entry name" value="RNase_HII"/>
    <property type="match status" value="1"/>
</dbReference>
<dbReference type="SUPFAM" id="SSF53098">
    <property type="entry name" value="Ribonuclease H-like"/>
    <property type="match status" value="1"/>
</dbReference>
<dbReference type="PROSITE" id="PS51975">
    <property type="entry name" value="RNASE_H_2"/>
    <property type="match status" value="1"/>
</dbReference>
<reference key="1">
    <citation type="submission" date="2009-01" db="EMBL/GenBank/DDBJ databases">
        <title>Complete sequence of Chloroflexus sp. Y-400-fl.</title>
        <authorList>
            <consortium name="US DOE Joint Genome Institute"/>
            <person name="Lucas S."/>
            <person name="Copeland A."/>
            <person name="Lapidus A."/>
            <person name="Glavina del Rio T."/>
            <person name="Dalin E."/>
            <person name="Tice H."/>
            <person name="Bruce D."/>
            <person name="Goodwin L."/>
            <person name="Pitluck S."/>
            <person name="Sims D."/>
            <person name="Kiss H."/>
            <person name="Brettin T."/>
            <person name="Detter J.C."/>
            <person name="Han C."/>
            <person name="Larimer F."/>
            <person name="Land M."/>
            <person name="Hauser L."/>
            <person name="Kyrpides N."/>
            <person name="Ovchinnikova G."/>
            <person name="Bryant D.A."/>
            <person name="Richardson P."/>
        </authorList>
    </citation>
    <scope>NUCLEOTIDE SEQUENCE [LARGE SCALE GENOMIC DNA]</scope>
    <source>
        <strain>ATCC 29364 / DSM 637 / Y-400-fl</strain>
    </source>
</reference>
<name>RNH2_CHLSY</name>
<gene>
    <name evidence="1" type="primary">rnhB</name>
    <name type="ordered locus">Chy400_1137</name>
</gene>
<evidence type="ECO:0000255" key="1">
    <source>
        <dbReference type="HAMAP-Rule" id="MF_00052"/>
    </source>
</evidence>
<evidence type="ECO:0000255" key="2">
    <source>
        <dbReference type="PROSITE-ProRule" id="PRU01319"/>
    </source>
</evidence>
<protein>
    <recommendedName>
        <fullName evidence="1">Ribonuclease HII</fullName>
        <shortName evidence="1">RNase HII</shortName>
        <ecNumber evidence="1">3.1.26.4</ecNumber>
    </recommendedName>
</protein>
<sequence>MLPDLSIEHDLQRRGYANLAGIDEAGRGCWAGPVVAAAVVLSPAVYRQPDLLAGVNDSKQLTAGARERIYTSIQTHALGVGVGIVPAFLIDAYGILPATRLAMIQALLALPCAVDALIIDAVQLPGISLPQTALVRGDERSLSIAAASIIAKVTRDRLMATADHCFPHYGFALHKGYGTAVHRRALAQYGPSPLHRRTFQPVIEALLSLEQS</sequence>
<feature type="chain" id="PRO_1000194446" description="Ribonuclease HII">
    <location>
        <begin position="1"/>
        <end position="212"/>
    </location>
</feature>
<feature type="domain" description="RNase H type-2" evidence="2">
    <location>
        <begin position="17"/>
        <end position="211"/>
    </location>
</feature>
<feature type="binding site" evidence="1">
    <location>
        <position position="23"/>
    </location>
    <ligand>
        <name>a divalent metal cation</name>
        <dbReference type="ChEBI" id="CHEBI:60240"/>
    </ligand>
</feature>
<feature type="binding site" evidence="1">
    <location>
        <position position="24"/>
    </location>
    <ligand>
        <name>a divalent metal cation</name>
        <dbReference type="ChEBI" id="CHEBI:60240"/>
    </ligand>
</feature>
<feature type="binding site" evidence="1">
    <location>
        <position position="120"/>
    </location>
    <ligand>
        <name>a divalent metal cation</name>
        <dbReference type="ChEBI" id="CHEBI:60240"/>
    </ligand>
</feature>